<dbReference type="EMBL" id="AF004913">
    <property type="protein sequence ID" value="AAB82418.1"/>
    <property type="molecule type" value="Genomic_DNA"/>
</dbReference>
<dbReference type="EMBL" id="U33007">
    <property type="protein sequence ID" value="AAB64884.1"/>
    <property type="molecule type" value="Genomic_DNA"/>
</dbReference>
<dbReference type="EMBL" id="BK006938">
    <property type="protein sequence ID" value="DAA12268.1"/>
    <property type="molecule type" value="Genomic_DNA"/>
</dbReference>
<dbReference type="PIR" id="S69710">
    <property type="entry name" value="S69710"/>
</dbReference>
<dbReference type="RefSeq" id="NP_010717.1">
    <property type="nucleotide sequence ID" value="NM_001180737.1"/>
</dbReference>
<dbReference type="PDB" id="3JAP">
    <property type="method" value="EM"/>
    <property type="resolution" value="4.90 A"/>
    <property type="chains" value="s=45-96"/>
</dbReference>
<dbReference type="PDB" id="4U1E">
    <property type="method" value="X-ray"/>
    <property type="resolution" value="2.00 A"/>
    <property type="chains" value="G=1-135"/>
</dbReference>
<dbReference type="PDB" id="6FYX">
    <property type="method" value="EM"/>
    <property type="resolution" value="3.05 A"/>
    <property type="chains" value="r=1-274"/>
</dbReference>
<dbReference type="PDB" id="6FYY">
    <property type="method" value="EM"/>
    <property type="resolution" value="3.05 A"/>
    <property type="chains" value="r=1-274"/>
</dbReference>
<dbReference type="PDB" id="6GSM">
    <property type="method" value="EM"/>
    <property type="resolution" value="5.15 A"/>
    <property type="chains" value="r=48-96"/>
</dbReference>
<dbReference type="PDB" id="6GSN">
    <property type="method" value="EM"/>
    <property type="resolution" value="5.75 A"/>
    <property type="chains" value="r=48-96"/>
</dbReference>
<dbReference type="PDB" id="6ZCE">
    <property type="method" value="EM"/>
    <property type="resolution" value="5.30 A"/>
    <property type="chains" value="r=1-274"/>
</dbReference>
<dbReference type="PDB" id="6ZU9">
    <property type="method" value="EM"/>
    <property type="resolution" value="6.20 A"/>
    <property type="chains" value="r=1-135"/>
</dbReference>
<dbReference type="PDB" id="8CAH">
    <property type="method" value="EM"/>
    <property type="resolution" value="3.00 A"/>
    <property type="chains" value="r=1-274"/>
</dbReference>
<dbReference type="PDB" id="8CAS">
    <property type="method" value="EM"/>
    <property type="resolution" value="3.30 A"/>
    <property type="chains" value="r=1-274"/>
</dbReference>
<dbReference type="PDBsum" id="3JAP"/>
<dbReference type="PDBsum" id="4U1E"/>
<dbReference type="PDBsum" id="6FYX"/>
<dbReference type="PDBsum" id="6FYY"/>
<dbReference type="PDBsum" id="6GSM"/>
<dbReference type="PDBsum" id="6GSN"/>
<dbReference type="PDBsum" id="6ZCE"/>
<dbReference type="PDBsum" id="6ZU9"/>
<dbReference type="PDBsum" id="8CAH"/>
<dbReference type="PDBsum" id="8CAS"/>
<dbReference type="EMDB" id="EMD-0057"/>
<dbReference type="EMDB" id="EMD-11160"/>
<dbReference type="EMDB" id="EMD-11439"/>
<dbReference type="EMDB" id="EMD-16525"/>
<dbReference type="SMR" id="Q04067"/>
<dbReference type="BioGRID" id="32487">
    <property type="interactions" value="137"/>
</dbReference>
<dbReference type="ComplexPortal" id="CPX-1831">
    <property type="entry name" value="Eukaryotic translation initiation factor 3 core complex"/>
</dbReference>
<dbReference type="DIP" id="DIP-1704N"/>
<dbReference type="FunCoup" id="Q04067">
    <property type="interactions" value="1328"/>
</dbReference>
<dbReference type="IntAct" id="Q04067">
    <property type="interactions" value="48"/>
</dbReference>
<dbReference type="MINT" id="Q04067"/>
<dbReference type="STRING" id="4932.YDR429C"/>
<dbReference type="GlyGen" id="Q04067">
    <property type="glycosylation" value="1 site, 1 O-linked glycan (1 site)"/>
</dbReference>
<dbReference type="iPTMnet" id="Q04067"/>
<dbReference type="PaxDb" id="4932-YDR429C"/>
<dbReference type="PeptideAtlas" id="Q04067"/>
<dbReference type="EnsemblFungi" id="YDR429C_mRNA">
    <property type="protein sequence ID" value="YDR429C"/>
    <property type="gene ID" value="YDR429C"/>
</dbReference>
<dbReference type="GeneID" id="852039"/>
<dbReference type="KEGG" id="sce:YDR429C"/>
<dbReference type="AGR" id="SGD:S000002837"/>
<dbReference type="SGD" id="S000002837">
    <property type="gene designation" value="TIF35"/>
</dbReference>
<dbReference type="VEuPathDB" id="FungiDB:YDR429C"/>
<dbReference type="eggNOG" id="KOG0122">
    <property type="taxonomic scope" value="Eukaryota"/>
</dbReference>
<dbReference type="GeneTree" id="ENSGT00510000047802"/>
<dbReference type="HOGENOM" id="CLU_034595_0_0_1"/>
<dbReference type="InParanoid" id="Q04067"/>
<dbReference type="OMA" id="ICQGDHF"/>
<dbReference type="OrthoDB" id="639027at2759"/>
<dbReference type="BioCyc" id="YEAST:G3O-29968-MONOMER"/>
<dbReference type="Reactome" id="R-SCE-156827">
    <property type="pathway name" value="L13a-mediated translational silencing of Ceruloplasmin expression"/>
</dbReference>
<dbReference type="Reactome" id="R-SCE-72649">
    <property type="pathway name" value="Translation initiation complex formation"/>
</dbReference>
<dbReference type="Reactome" id="R-SCE-72695">
    <property type="pathway name" value="Formation of the ternary complex, and subsequently, the 43S complex"/>
</dbReference>
<dbReference type="Reactome" id="R-SCE-72702">
    <property type="pathway name" value="Ribosomal scanning and start codon recognition"/>
</dbReference>
<dbReference type="BioGRID-ORCS" id="852039">
    <property type="hits" value="2 hits in 10 CRISPR screens"/>
</dbReference>
<dbReference type="CD-CODE" id="E03F929F">
    <property type="entry name" value="Stress granule"/>
</dbReference>
<dbReference type="EvolutionaryTrace" id="Q04067"/>
<dbReference type="PRO" id="PR:Q04067"/>
<dbReference type="Proteomes" id="UP000002311">
    <property type="component" value="Chromosome IV"/>
</dbReference>
<dbReference type="RNAct" id="Q04067">
    <property type="molecule type" value="protein"/>
</dbReference>
<dbReference type="GO" id="GO:0010494">
    <property type="term" value="C:cytoplasmic stress granule"/>
    <property type="evidence" value="ECO:0007005"/>
    <property type="project" value="SGD"/>
</dbReference>
<dbReference type="GO" id="GO:0016282">
    <property type="term" value="C:eukaryotic 43S preinitiation complex"/>
    <property type="evidence" value="ECO:0007669"/>
    <property type="project" value="UniProtKB-UniRule"/>
</dbReference>
<dbReference type="GO" id="GO:0033290">
    <property type="term" value="C:eukaryotic 48S preinitiation complex"/>
    <property type="evidence" value="ECO:0007669"/>
    <property type="project" value="UniProtKB-UniRule"/>
</dbReference>
<dbReference type="GO" id="GO:0005852">
    <property type="term" value="C:eukaryotic translation initiation factor 3 complex"/>
    <property type="evidence" value="ECO:0000314"/>
    <property type="project" value="SGD"/>
</dbReference>
<dbReference type="GO" id="GO:0043614">
    <property type="term" value="C:multi-eIF complex"/>
    <property type="evidence" value="ECO:0000314"/>
    <property type="project" value="SGD"/>
</dbReference>
<dbReference type="GO" id="GO:0003723">
    <property type="term" value="F:RNA binding"/>
    <property type="evidence" value="ECO:0007669"/>
    <property type="project" value="UniProtKB-UniRule"/>
</dbReference>
<dbReference type="GO" id="GO:0003743">
    <property type="term" value="F:translation initiation factor activity"/>
    <property type="evidence" value="ECO:0000314"/>
    <property type="project" value="SGD"/>
</dbReference>
<dbReference type="GO" id="GO:0001732">
    <property type="term" value="P:formation of cytoplasmic translation initiation complex"/>
    <property type="evidence" value="ECO:0007669"/>
    <property type="project" value="UniProtKB-UniRule"/>
</dbReference>
<dbReference type="GO" id="GO:0002188">
    <property type="term" value="P:translation reinitiation"/>
    <property type="evidence" value="ECO:0000315"/>
    <property type="project" value="SGD"/>
</dbReference>
<dbReference type="GO" id="GO:0006413">
    <property type="term" value="P:translational initiation"/>
    <property type="evidence" value="ECO:0000314"/>
    <property type="project" value="ComplexPortal"/>
</dbReference>
<dbReference type="GO" id="GO:0006415">
    <property type="term" value="P:translational termination"/>
    <property type="evidence" value="ECO:0000315"/>
    <property type="project" value="SGD"/>
</dbReference>
<dbReference type="CDD" id="cd12933">
    <property type="entry name" value="eIF3G"/>
    <property type="match status" value="1"/>
</dbReference>
<dbReference type="CDD" id="cd12408">
    <property type="entry name" value="RRM_eIF3G_like"/>
    <property type="match status" value="1"/>
</dbReference>
<dbReference type="FunFam" id="3.30.70.330:FF:000716">
    <property type="entry name" value="Eukaryotic translation initiation factor 3 subunit G"/>
    <property type="match status" value="1"/>
</dbReference>
<dbReference type="Gene3D" id="3.30.70.330">
    <property type="match status" value="1"/>
</dbReference>
<dbReference type="HAMAP" id="MF_03006">
    <property type="entry name" value="eIF3g"/>
    <property type="match status" value="1"/>
</dbReference>
<dbReference type="InterPro" id="IPR017334">
    <property type="entry name" value="eIF3_g"/>
</dbReference>
<dbReference type="InterPro" id="IPR024675">
    <property type="entry name" value="eIF3g_N"/>
</dbReference>
<dbReference type="InterPro" id="IPR034240">
    <property type="entry name" value="eIF3G_RRM"/>
</dbReference>
<dbReference type="InterPro" id="IPR012677">
    <property type="entry name" value="Nucleotide-bd_a/b_plait_sf"/>
</dbReference>
<dbReference type="InterPro" id="IPR035979">
    <property type="entry name" value="RBD_domain_sf"/>
</dbReference>
<dbReference type="InterPro" id="IPR000504">
    <property type="entry name" value="RRM_dom"/>
</dbReference>
<dbReference type="PANTHER" id="PTHR10352">
    <property type="entry name" value="EUKARYOTIC TRANSLATION INITIATION FACTOR 3 SUBUNIT G"/>
    <property type="match status" value="1"/>
</dbReference>
<dbReference type="Pfam" id="PF12353">
    <property type="entry name" value="eIF3g"/>
    <property type="match status" value="1"/>
</dbReference>
<dbReference type="Pfam" id="PF00076">
    <property type="entry name" value="RRM_1"/>
    <property type="match status" value="1"/>
</dbReference>
<dbReference type="PIRSF" id="PIRSF037949">
    <property type="entry name" value="Transl_init_eIF-3_RNA-bind"/>
    <property type="match status" value="1"/>
</dbReference>
<dbReference type="SMART" id="SM00360">
    <property type="entry name" value="RRM"/>
    <property type="match status" value="1"/>
</dbReference>
<dbReference type="SUPFAM" id="SSF54928">
    <property type="entry name" value="RNA-binding domain, RBD"/>
    <property type="match status" value="1"/>
</dbReference>
<dbReference type="PROSITE" id="PS50102">
    <property type="entry name" value="RRM"/>
    <property type="match status" value="1"/>
</dbReference>
<name>EIF3G_YEAST</name>
<proteinExistence type="evidence at protein level"/>
<feature type="initiator methionine" description="Removed" evidence="8">
    <location>
        <position position="1"/>
    </location>
</feature>
<feature type="chain" id="PRO_0000123514" description="Eukaryotic translation initiation factor 3 subunit G">
    <location>
        <begin position="2"/>
        <end position="274"/>
    </location>
</feature>
<feature type="domain" description="RRM" evidence="1">
    <location>
        <begin position="191"/>
        <end position="270"/>
    </location>
</feature>
<feature type="region of interest" description="Disordered" evidence="2">
    <location>
        <begin position="137"/>
        <end position="186"/>
    </location>
</feature>
<feature type="compositionally biased region" description="Basic and acidic residues" evidence="2">
    <location>
        <begin position="172"/>
        <end position="186"/>
    </location>
</feature>
<feature type="modified residue" description="N-acetylserine" evidence="8">
    <location>
        <position position="2"/>
    </location>
</feature>
<feature type="modified residue" description="Phosphoserine" evidence="7">
    <location>
        <position position="131"/>
    </location>
</feature>
<feature type="strand" evidence="9">
    <location>
        <begin position="13"/>
        <end position="15"/>
    </location>
</feature>
<feature type="strand" evidence="9">
    <location>
        <begin position="17"/>
        <end position="25"/>
    </location>
</feature>
<feature type="strand" evidence="9">
    <location>
        <begin position="28"/>
        <end position="36"/>
    </location>
</feature>
<feature type="helix" evidence="9">
    <location>
        <begin position="47"/>
        <end position="53"/>
    </location>
</feature>
<feature type="helix" evidence="9">
    <location>
        <begin position="59"/>
        <end position="61"/>
    </location>
</feature>
<feature type="helix" evidence="9">
    <location>
        <begin position="87"/>
        <end position="95"/>
    </location>
</feature>
<reference key="1">
    <citation type="journal article" date="1999" name="J. Biol. Chem.">
        <title>Characterization of the p33 subunit of eukaryotic translation initiation factor-3 from Saccharomyces cerevisiae.</title>
        <authorList>
            <person name="Hanachi P."/>
            <person name="Hershey J.W.B."/>
            <person name="Vornlocher H.-P."/>
        </authorList>
    </citation>
    <scope>NUCLEOTIDE SEQUENCE [GENOMIC DNA]</scope>
    <scope>FUNCTION</scope>
    <scope>RNA-BINDING</scope>
    <source>
        <strain>ATCC 200060 / W303</strain>
    </source>
</reference>
<reference key="2">
    <citation type="journal article" date="1997" name="Nature">
        <title>The nucleotide sequence of Saccharomyces cerevisiae chromosome IV.</title>
        <authorList>
            <person name="Jacq C."/>
            <person name="Alt-Moerbe J."/>
            <person name="Andre B."/>
            <person name="Arnold W."/>
            <person name="Bahr A."/>
            <person name="Ballesta J.P.G."/>
            <person name="Bargues M."/>
            <person name="Baron L."/>
            <person name="Becker A."/>
            <person name="Biteau N."/>
            <person name="Bloecker H."/>
            <person name="Blugeon C."/>
            <person name="Boskovic J."/>
            <person name="Brandt P."/>
            <person name="Brueckner M."/>
            <person name="Buitrago M.J."/>
            <person name="Coster F."/>
            <person name="Delaveau T."/>
            <person name="del Rey F."/>
            <person name="Dujon B."/>
            <person name="Eide L.G."/>
            <person name="Garcia-Cantalejo J.M."/>
            <person name="Goffeau A."/>
            <person name="Gomez-Peris A."/>
            <person name="Granotier C."/>
            <person name="Hanemann V."/>
            <person name="Hankeln T."/>
            <person name="Hoheisel J.D."/>
            <person name="Jaeger W."/>
            <person name="Jimenez A."/>
            <person name="Jonniaux J.-L."/>
            <person name="Kraemer C."/>
            <person name="Kuester H."/>
            <person name="Laamanen P."/>
            <person name="Legros Y."/>
            <person name="Louis E.J."/>
            <person name="Moeller-Rieker S."/>
            <person name="Monnet A."/>
            <person name="Moro M."/>
            <person name="Mueller-Auer S."/>
            <person name="Nussbaumer B."/>
            <person name="Paricio N."/>
            <person name="Paulin L."/>
            <person name="Perea J."/>
            <person name="Perez-Alonso M."/>
            <person name="Perez-Ortin J.E."/>
            <person name="Pohl T.M."/>
            <person name="Prydz H."/>
            <person name="Purnelle B."/>
            <person name="Rasmussen S.W."/>
            <person name="Remacha M.A."/>
            <person name="Revuelta J.L."/>
            <person name="Rieger M."/>
            <person name="Salom D."/>
            <person name="Saluz H.P."/>
            <person name="Saiz J.E."/>
            <person name="Saren A.-M."/>
            <person name="Schaefer M."/>
            <person name="Scharfe M."/>
            <person name="Schmidt E.R."/>
            <person name="Schneider C."/>
            <person name="Scholler P."/>
            <person name="Schwarz S."/>
            <person name="Soler-Mira A."/>
            <person name="Urrestarazu L.A."/>
            <person name="Verhasselt P."/>
            <person name="Vissers S."/>
            <person name="Voet M."/>
            <person name="Volckaert G."/>
            <person name="Wagner G."/>
            <person name="Wambutt R."/>
            <person name="Wedler E."/>
            <person name="Wedler H."/>
            <person name="Woelfl S."/>
            <person name="Harris D.E."/>
            <person name="Bowman S."/>
            <person name="Brown D."/>
            <person name="Churcher C.M."/>
            <person name="Connor R."/>
            <person name="Dedman K."/>
            <person name="Gentles S."/>
            <person name="Hamlin N."/>
            <person name="Hunt S."/>
            <person name="Jones L."/>
            <person name="McDonald S."/>
            <person name="Murphy L.D."/>
            <person name="Niblett D."/>
            <person name="Odell C."/>
            <person name="Oliver K."/>
            <person name="Rajandream M.A."/>
            <person name="Richards C."/>
            <person name="Shore L."/>
            <person name="Walsh S.V."/>
            <person name="Barrell B.G."/>
            <person name="Dietrich F.S."/>
            <person name="Mulligan J.T."/>
            <person name="Allen E."/>
            <person name="Araujo R."/>
            <person name="Aviles E."/>
            <person name="Berno A."/>
            <person name="Carpenter J."/>
            <person name="Chen E."/>
            <person name="Cherry J.M."/>
            <person name="Chung E."/>
            <person name="Duncan M."/>
            <person name="Hunicke-Smith S."/>
            <person name="Hyman R.W."/>
            <person name="Komp C."/>
            <person name="Lashkari D."/>
            <person name="Lew H."/>
            <person name="Lin D."/>
            <person name="Mosedale D."/>
            <person name="Nakahara K."/>
            <person name="Namath A."/>
            <person name="Oefner P."/>
            <person name="Oh C."/>
            <person name="Petel F.X."/>
            <person name="Roberts D."/>
            <person name="Schramm S."/>
            <person name="Schroeder M."/>
            <person name="Shogren T."/>
            <person name="Shroff N."/>
            <person name="Winant A."/>
            <person name="Yelton M.A."/>
            <person name="Botstein D."/>
            <person name="Davis R.W."/>
            <person name="Johnston M."/>
            <person name="Andrews S."/>
            <person name="Brinkman R."/>
            <person name="Cooper J."/>
            <person name="Ding H."/>
            <person name="Du Z."/>
            <person name="Favello A."/>
            <person name="Fulton L."/>
            <person name="Gattung S."/>
            <person name="Greco T."/>
            <person name="Hallsworth K."/>
            <person name="Hawkins J."/>
            <person name="Hillier L.W."/>
            <person name="Jier M."/>
            <person name="Johnson D."/>
            <person name="Johnston L."/>
            <person name="Kirsten J."/>
            <person name="Kucaba T."/>
            <person name="Langston Y."/>
            <person name="Latreille P."/>
            <person name="Le T."/>
            <person name="Mardis E."/>
            <person name="Menezes S."/>
            <person name="Miller N."/>
            <person name="Nhan M."/>
            <person name="Pauley A."/>
            <person name="Peluso D."/>
            <person name="Rifkin L."/>
            <person name="Riles L."/>
            <person name="Taich A."/>
            <person name="Trevaskis E."/>
            <person name="Vignati D."/>
            <person name="Wilcox L."/>
            <person name="Wohldman P."/>
            <person name="Vaudin M."/>
            <person name="Wilson R."/>
            <person name="Waterston R."/>
            <person name="Albermann K."/>
            <person name="Hani J."/>
            <person name="Heumann K."/>
            <person name="Kleine K."/>
            <person name="Mewes H.-W."/>
            <person name="Zollner A."/>
            <person name="Zaccaria P."/>
        </authorList>
    </citation>
    <scope>NUCLEOTIDE SEQUENCE [LARGE SCALE GENOMIC DNA]</scope>
    <source>
        <strain>ATCC 204508 / S288c</strain>
    </source>
</reference>
<reference key="3">
    <citation type="journal article" date="2014" name="G3 (Bethesda)">
        <title>The reference genome sequence of Saccharomyces cerevisiae: Then and now.</title>
        <authorList>
            <person name="Engel S.R."/>
            <person name="Dietrich F.S."/>
            <person name="Fisk D.G."/>
            <person name="Binkley G."/>
            <person name="Balakrishnan R."/>
            <person name="Costanzo M.C."/>
            <person name="Dwight S.S."/>
            <person name="Hitz B.C."/>
            <person name="Karra K."/>
            <person name="Nash R.S."/>
            <person name="Weng S."/>
            <person name="Wong E.D."/>
            <person name="Lloyd P."/>
            <person name="Skrzypek M.S."/>
            <person name="Miyasato S.R."/>
            <person name="Simison M."/>
            <person name="Cherry J.M."/>
        </authorList>
    </citation>
    <scope>GENOME REANNOTATION</scope>
    <source>
        <strain>ATCC 204508 / S288c</strain>
    </source>
</reference>
<reference key="4">
    <citation type="journal article" date="1998" name="Mol. Cell. Biol.">
        <title>Identification of a translation initiation factor 3 (eIF3) core complex, conserved in yeast and mammals, that interacts with eIF5.</title>
        <authorList>
            <person name="Phan L."/>
            <person name="Zhang X."/>
            <person name="Asano K."/>
            <person name="Anderson J."/>
            <person name="Vornlocher H.-P."/>
            <person name="Greenberg J.R."/>
            <person name="Qin J."/>
            <person name="Hinnebusch A.G."/>
        </authorList>
    </citation>
    <scope>IDENTIFICATION IN THE EIF-3 CORE COMPLEX</scope>
    <scope>IDENTIFICATION BY MASS SPECTROMETRY</scope>
</reference>
<reference key="5">
    <citation type="journal article" date="2003" name="Nature">
        <title>Global analysis of protein localization in budding yeast.</title>
        <authorList>
            <person name="Huh W.-K."/>
            <person name="Falvo J.V."/>
            <person name="Gerke L.C."/>
            <person name="Carroll A.S."/>
            <person name="Howson R.W."/>
            <person name="Weissman J.S."/>
            <person name="O'Shea E.K."/>
        </authorList>
    </citation>
    <scope>SUBCELLULAR LOCATION [LARGE SCALE ANALYSIS]</scope>
</reference>
<reference key="6">
    <citation type="journal article" date="2006" name="Mol. Cell. Biol.">
        <title>Interaction of the RNP1 motif in PRT1 with HCR1 promotes 40S binding of eukaryotic initiation factor 3 in yeast.</title>
        <authorList>
            <person name="Nielsen K.H."/>
            <person name="Valasek L."/>
            <person name="Sykes C."/>
            <person name="Jivotovskaya A."/>
            <person name="Hinnebusch A.G."/>
        </authorList>
    </citation>
    <scope>INTERACTION WITH PRT1</scope>
    <scope>ASSOCIATION WITH THE 40S RIBOSOME</scope>
</reference>
<reference key="7">
    <citation type="journal article" date="2008" name="Mol. Cell. Proteomics">
        <title>A multidimensional chromatography technology for in-depth phosphoproteome analysis.</title>
        <authorList>
            <person name="Albuquerque C.P."/>
            <person name="Smolka M.B."/>
            <person name="Payne S.H."/>
            <person name="Bafna V."/>
            <person name="Eng J."/>
            <person name="Zhou H."/>
        </authorList>
    </citation>
    <scope>PHOSPHORYLATION [LARGE SCALE ANALYSIS] AT SER-131</scope>
    <scope>IDENTIFICATION BY MASS SPECTROMETRY [LARGE SCALE ANALYSIS]</scope>
</reference>
<reference key="8">
    <citation type="journal article" date="2008" name="Proc. Natl. Acad. Sci. U.S.A.">
        <title>Mass spectrometry reveals modularity and a complete subunit interaction map of the eukaryotic translation factor eIF3.</title>
        <authorList>
            <person name="Zhou M."/>
            <person name="Sandercock A.M."/>
            <person name="Fraser C.S."/>
            <person name="Ridlova G."/>
            <person name="Stephens E."/>
            <person name="Schenauer M.R."/>
            <person name="Yokoi-Fong T."/>
            <person name="Barsky D."/>
            <person name="Leary J.A."/>
            <person name="Hershey J.W.B."/>
            <person name="Doudna J.A."/>
            <person name="Robinson C.V."/>
        </authorList>
    </citation>
    <scope>IDENTIFICATION IN THE EIF-3 COMPLEX WITH NIP1; PRT1; TIF32 AND TIF34</scope>
</reference>
<reference key="9">
    <citation type="journal article" date="2009" name="Science">
        <title>Global analysis of Cdk1 substrate phosphorylation sites provides insights into evolution.</title>
        <authorList>
            <person name="Holt L.J."/>
            <person name="Tuch B.B."/>
            <person name="Villen J."/>
            <person name="Johnson A.D."/>
            <person name="Gygi S.P."/>
            <person name="Morgan D.O."/>
        </authorList>
    </citation>
    <scope>IDENTIFICATION BY MASS SPECTROMETRY [LARGE SCALE ANALYSIS]</scope>
</reference>
<reference key="10">
    <citation type="journal article" date="2012" name="Proc. Natl. Acad. Sci. U.S.A.">
        <title>N-terminal acetylome analyses and functional insights of the N-terminal acetyltransferase NatB.</title>
        <authorList>
            <person name="Van Damme P."/>
            <person name="Lasa M."/>
            <person name="Polevoda B."/>
            <person name="Gazquez C."/>
            <person name="Elosegui-Artola A."/>
            <person name="Kim D.S."/>
            <person name="De Juan-Pardo E."/>
            <person name="Demeyer K."/>
            <person name="Hole K."/>
            <person name="Larrea E."/>
            <person name="Timmerman E."/>
            <person name="Prieto J."/>
            <person name="Arnesen T."/>
            <person name="Sherman F."/>
            <person name="Gevaert K."/>
            <person name="Aldabe R."/>
        </authorList>
    </citation>
    <scope>ACETYLATION [LARGE SCALE ANALYSIS] AT SER-2</scope>
    <scope>CLEAVAGE OF INITIATOR METHIONINE [LARGE SCALE ANALYSIS]</scope>
    <scope>IDENTIFICATION BY MASS SPECTROMETRY [LARGE SCALE ANALYSIS]</scope>
</reference>
<keyword id="KW-0002">3D-structure</keyword>
<keyword id="KW-0007">Acetylation</keyword>
<keyword id="KW-0963">Cytoplasm</keyword>
<keyword id="KW-0396">Initiation factor</keyword>
<keyword id="KW-0597">Phosphoprotein</keyword>
<keyword id="KW-0648">Protein biosynthesis</keyword>
<keyword id="KW-1185">Reference proteome</keyword>
<keyword id="KW-0694">RNA-binding</keyword>
<comment type="function">
    <text evidence="1 3">RNA-binding component of the eukaryotic translation initiation factor 3 (eIF-3) complex, which is involved in protein synthesis of a specialized repertoire of mRNAs and, together with other initiation factors, stimulates binding of mRNA and methionyl-tRNAi to the 40S ribosome. The eIF-3 complex specifically targets and initiates translation of a subset of mRNAs involved in cell proliferation (Potential). Binds to the 18S rRNA but non-specifically (PubMed:10085088).</text>
</comment>
<comment type="subunit">
    <text evidence="5 6">The eukaryotic translation initiation factor 3 (eIF-3) core complex is composed of TIF32, PRT1, NIP1, TIF34 and TIF35. The factors eIF-1, eIF-2, eIF-3, TIF5/eIF-5 and methionyl-tRNAi form a multifactor complex (MFC) that may bind to the 40S ribosome.</text>
</comment>
<comment type="interaction">
    <interactant intactId="EBI-8958">
        <id>Q04067</id>
    </interactant>
    <interactant intactId="EBI-8973">
        <id>P06103</id>
        <label>PRT1</label>
    </interactant>
    <organismsDiffer>false</organismsDiffer>
    <experiments>15</experiments>
</comment>
<comment type="interaction">
    <interactant intactId="EBI-8958">
        <id>Q04067</id>
    </interactant>
    <interactant intactId="EBI-8951">
        <id>P40217</id>
        <label>TIF34</label>
    </interactant>
    <organismsDiffer>false</organismsDiffer>
    <experiments>8</experiments>
</comment>
<comment type="subcellular location">
    <subcellularLocation>
        <location evidence="1 4">Cytoplasm</location>
    </subcellularLocation>
</comment>
<comment type="similarity">
    <text evidence="1">Belongs to the eIF-3 subunit G family.</text>
</comment>
<sequence>MSEVAPEEIIENADGSRSIITYKIEDGVKYKITQKVKEVKVLEKVHKSVAERKNWHKYGSEKGSPAGPSAVTARLGEEVELRLSRNWKQAEEERIQKEKASLTKTGLQCRLCGNDHMTMNCPFKTILSELSALEDPATNEGGVEAASEEKAGQVGGAGSIPGQYVPPSRRAGARDPSSDAYRDSRERDDMCTLKIMQVNENADENSLREELLFPFAPIPRVSVVRNKETGKSRGLAFVTFSSEEVAEQALRFLDGRGYMNLILRVEWSKPKVKE</sequence>
<protein>
    <recommendedName>
        <fullName evidence="1">Eukaryotic translation initiation factor 3 subunit G</fullName>
        <shortName evidence="1">eIF3g</shortName>
    </recommendedName>
    <alternativeName>
        <fullName evidence="1">Eukaryotic translation initiation factor 3 RNA-binding subunit</fullName>
        <shortName evidence="1">eIF-3 RNA-binding subunit</shortName>
    </alternativeName>
    <alternativeName>
        <fullName>Translation initiation factor eIF3 p33 subunit</fullName>
        <shortName>eIF3 p33</shortName>
    </alternativeName>
</protein>
<organism>
    <name type="scientific">Saccharomyces cerevisiae (strain ATCC 204508 / S288c)</name>
    <name type="common">Baker's yeast</name>
    <dbReference type="NCBI Taxonomy" id="559292"/>
    <lineage>
        <taxon>Eukaryota</taxon>
        <taxon>Fungi</taxon>
        <taxon>Dikarya</taxon>
        <taxon>Ascomycota</taxon>
        <taxon>Saccharomycotina</taxon>
        <taxon>Saccharomycetes</taxon>
        <taxon>Saccharomycetales</taxon>
        <taxon>Saccharomycetaceae</taxon>
        <taxon>Saccharomyces</taxon>
    </lineage>
</organism>
<evidence type="ECO:0000255" key="1">
    <source>
        <dbReference type="HAMAP-Rule" id="MF_03006"/>
    </source>
</evidence>
<evidence type="ECO:0000256" key="2">
    <source>
        <dbReference type="SAM" id="MobiDB-lite"/>
    </source>
</evidence>
<evidence type="ECO:0000269" key="3">
    <source>
    </source>
</evidence>
<evidence type="ECO:0000269" key="4">
    <source>
    </source>
</evidence>
<evidence type="ECO:0000269" key="5">
    <source>
    </source>
</evidence>
<evidence type="ECO:0000269" key="6">
    <source>
    </source>
</evidence>
<evidence type="ECO:0007744" key="7">
    <source>
    </source>
</evidence>
<evidence type="ECO:0007744" key="8">
    <source>
    </source>
</evidence>
<evidence type="ECO:0007829" key="9">
    <source>
        <dbReference type="PDB" id="4U1E"/>
    </source>
</evidence>
<accession>Q04067</accession>
<accession>D6VT58</accession>
<gene>
    <name evidence="1" type="primary">TIF35</name>
    <name type="ordered locus">YDR429C</name>
    <name type="ORF">D9461.16</name>
</gene>